<protein>
    <recommendedName>
        <fullName evidence="1">Aspartyl/glutamyl-tRNA(Asn/Gln) amidotransferase subunit C</fullName>
        <shortName evidence="1">Asp/Glu-ADT subunit C</shortName>
        <ecNumber evidence="1">6.3.5.-</ecNumber>
    </recommendedName>
</protein>
<name>GATC_DESOH</name>
<keyword id="KW-0067">ATP-binding</keyword>
<keyword id="KW-0436">Ligase</keyword>
<keyword id="KW-0547">Nucleotide-binding</keyword>
<keyword id="KW-0648">Protein biosynthesis</keyword>
<keyword id="KW-1185">Reference proteome</keyword>
<feature type="chain" id="PRO_1000095282" description="Aspartyl/glutamyl-tRNA(Asn/Gln) amidotransferase subunit C">
    <location>
        <begin position="1"/>
        <end position="95"/>
    </location>
</feature>
<gene>
    <name evidence="1" type="primary">gatC</name>
    <name type="ordered locus">Dole_0152</name>
</gene>
<proteinExistence type="inferred from homology"/>
<reference key="1">
    <citation type="submission" date="2007-10" db="EMBL/GenBank/DDBJ databases">
        <title>Complete sequence of Desulfococcus oleovorans Hxd3.</title>
        <authorList>
            <consortium name="US DOE Joint Genome Institute"/>
            <person name="Copeland A."/>
            <person name="Lucas S."/>
            <person name="Lapidus A."/>
            <person name="Barry K."/>
            <person name="Glavina del Rio T."/>
            <person name="Dalin E."/>
            <person name="Tice H."/>
            <person name="Pitluck S."/>
            <person name="Kiss H."/>
            <person name="Brettin T."/>
            <person name="Bruce D."/>
            <person name="Detter J.C."/>
            <person name="Han C."/>
            <person name="Schmutz J."/>
            <person name="Larimer F."/>
            <person name="Land M."/>
            <person name="Hauser L."/>
            <person name="Kyrpides N."/>
            <person name="Kim E."/>
            <person name="Wawrik B."/>
            <person name="Richardson P."/>
        </authorList>
    </citation>
    <scope>NUCLEOTIDE SEQUENCE [LARGE SCALE GENOMIC DNA]</scope>
    <source>
        <strain>DSM 6200 / JCM 39069 / Hxd3</strain>
    </source>
</reference>
<comment type="function">
    <text evidence="1">Allows the formation of correctly charged Asn-tRNA(Asn) or Gln-tRNA(Gln) through the transamidation of misacylated Asp-tRNA(Asn) or Glu-tRNA(Gln) in organisms which lack either or both of asparaginyl-tRNA or glutaminyl-tRNA synthetases. The reaction takes place in the presence of glutamine and ATP through an activated phospho-Asp-tRNA(Asn) or phospho-Glu-tRNA(Gln).</text>
</comment>
<comment type="catalytic activity">
    <reaction evidence="1">
        <text>L-glutamyl-tRNA(Gln) + L-glutamine + ATP + H2O = L-glutaminyl-tRNA(Gln) + L-glutamate + ADP + phosphate + H(+)</text>
        <dbReference type="Rhea" id="RHEA:17521"/>
        <dbReference type="Rhea" id="RHEA-COMP:9681"/>
        <dbReference type="Rhea" id="RHEA-COMP:9684"/>
        <dbReference type="ChEBI" id="CHEBI:15377"/>
        <dbReference type="ChEBI" id="CHEBI:15378"/>
        <dbReference type="ChEBI" id="CHEBI:29985"/>
        <dbReference type="ChEBI" id="CHEBI:30616"/>
        <dbReference type="ChEBI" id="CHEBI:43474"/>
        <dbReference type="ChEBI" id="CHEBI:58359"/>
        <dbReference type="ChEBI" id="CHEBI:78520"/>
        <dbReference type="ChEBI" id="CHEBI:78521"/>
        <dbReference type="ChEBI" id="CHEBI:456216"/>
    </reaction>
</comment>
<comment type="catalytic activity">
    <reaction evidence="1">
        <text>L-aspartyl-tRNA(Asn) + L-glutamine + ATP + H2O = L-asparaginyl-tRNA(Asn) + L-glutamate + ADP + phosphate + 2 H(+)</text>
        <dbReference type="Rhea" id="RHEA:14513"/>
        <dbReference type="Rhea" id="RHEA-COMP:9674"/>
        <dbReference type="Rhea" id="RHEA-COMP:9677"/>
        <dbReference type="ChEBI" id="CHEBI:15377"/>
        <dbReference type="ChEBI" id="CHEBI:15378"/>
        <dbReference type="ChEBI" id="CHEBI:29985"/>
        <dbReference type="ChEBI" id="CHEBI:30616"/>
        <dbReference type="ChEBI" id="CHEBI:43474"/>
        <dbReference type="ChEBI" id="CHEBI:58359"/>
        <dbReference type="ChEBI" id="CHEBI:78515"/>
        <dbReference type="ChEBI" id="CHEBI:78516"/>
        <dbReference type="ChEBI" id="CHEBI:456216"/>
    </reaction>
</comment>
<comment type="subunit">
    <text evidence="1">Heterotrimer of A, B and C subunits.</text>
</comment>
<comment type="similarity">
    <text evidence="1">Belongs to the GatC family.</text>
</comment>
<sequence>MKITPDDIRHVAKLARLDIAETDINAFVSQIGEILDYVDTLNQVATENVEPMAHAISLTNAFREDTVREAGPVEKILNNAPAAADNMFCVPKIIE</sequence>
<evidence type="ECO:0000255" key="1">
    <source>
        <dbReference type="HAMAP-Rule" id="MF_00122"/>
    </source>
</evidence>
<dbReference type="EC" id="6.3.5.-" evidence="1"/>
<dbReference type="EMBL" id="CP000859">
    <property type="protein sequence ID" value="ABW65962.1"/>
    <property type="molecule type" value="Genomic_DNA"/>
</dbReference>
<dbReference type="RefSeq" id="WP_012173581.1">
    <property type="nucleotide sequence ID" value="NC_009943.1"/>
</dbReference>
<dbReference type="SMR" id="A8ZSP9"/>
<dbReference type="STRING" id="96561.Dole_0152"/>
<dbReference type="KEGG" id="dol:Dole_0152"/>
<dbReference type="eggNOG" id="COG0721">
    <property type="taxonomic scope" value="Bacteria"/>
</dbReference>
<dbReference type="HOGENOM" id="CLU_105899_6_1_7"/>
<dbReference type="OrthoDB" id="9813938at2"/>
<dbReference type="Proteomes" id="UP000008561">
    <property type="component" value="Chromosome"/>
</dbReference>
<dbReference type="GO" id="GO:0050566">
    <property type="term" value="F:asparaginyl-tRNA synthase (glutamine-hydrolyzing) activity"/>
    <property type="evidence" value="ECO:0007669"/>
    <property type="project" value="RHEA"/>
</dbReference>
<dbReference type="GO" id="GO:0005524">
    <property type="term" value="F:ATP binding"/>
    <property type="evidence" value="ECO:0007669"/>
    <property type="project" value="UniProtKB-KW"/>
</dbReference>
<dbReference type="GO" id="GO:0050567">
    <property type="term" value="F:glutaminyl-tRNA synthase (glutamine-hydrolyzing) activity"/>
    <property type="evidence" value="ECO:0007669"/>
    <property type="project" value="UniProtKB-UniRule"/>
</dbReference>
<dbReference type="GO" id="GO:0070681">
    <property type="term" value="P:glutaminyl-tRNAGln biosynthesis via transamidation"/>
    <property type="evidence" value="ECO:0007669"/>
    <property type="project" value="TreeGrafter"/>
</dbReference>
<dbReference type="GO" id="GO:0006450">
    <property type="term" value="P:regulation of translational fidelity"/>
    <property type="evidence" value="ECO:0007669"/>
    <property type="project" value="InterPro"/>
</dbReference>
<dbReference type="GO" id="GO:0006412">
    <property type="term" value="P:translation"/>
    <property type="evidence" value="ECO:0007669"/>
    <property type="project" value="UniProtKB-UniRule"/>
</dbReference>
<dbReference type="Gene3D" id="1.10.20.60">
    <property type="entry name" value="Glu-tRNAGln amidotransferase C subunit, N-terminal domain"/>
    <property type="match status" value="1"/>
</dbReference>
<dbReference type="HAMAP" id="MF_00122">
    <property type="entry name" value="GatC"/>
    <property type="match status" value="1"/>
</dbReference>
<dbReference type="InterPro" id="IPR036113">
    <property type="entry name" value="Asp/Glu-ADT_sf_sub_c"/>
</dbReference>
<dbReference type="InterPro" id="IPR003837">
    <property type="entry name" value="GatC"/>
</dbReference>
<dbReference type="NCBIfam" id="TIGR00135">
    <property type="entry name" value="gatC"/>
    <property type="match status" value="1"/>
</dbReference>
<dbReference type="PANTHER" id="PTHR15004">
    <property type="entry name" value="GLUTAMYL-TRNA(GLN) AMIDOTRANSFERASE SUBUNIT C, MITOCHONDRIAL"/>
    <property type="match status" value="1"/>
</dbReference>
<dbReference type="PANTHER" id="PTHR15004:SF0">
    <property type="entry name" value="GLUTAMYL-TRNA(GLN) AMIDOTRANSFERASE SUBUNIT C, MITOCHONDRIAL"/>
    <property type="match status" value="1"/>
</dbReference>
<dbReference type="Pfam" id="PF02686">
    <property type="entry name" value="GatC"/>
    <property type="match status" value="1"/>
</dbReference>
<dbReference type="SUPFAM" id="SSF141000">
    <property type="entry name" value="Glu-tRNAGln amidotransferase C subunit"/>
    <property type="match status" value="1"/>
</dbReference>
<organism>
    <name type="scientific">Desulfosudis oleivorans (strain DSM 6200 / JCM 39069 / Hxd3)</name>
    <name type="common">Desulfococcus oleovorans</name>
    <dbReference type="NCBI Taxonomy" id="96561"/>
    <lineage>
        <taxon>Bacteria</taxon>
        <taxon>Pseudomonadati</taxon>
        <taxon>Thermodesulfobacteriota</taxon>
        <taxon>Desulfobacteria</taxon>
        <taxon>Desulfobacterales</taxon>
        <taxon>Desulfosudaceae</taxon>
        <taxon>Desulfosudis</taxon>
    </lineage>
</organism>
<accession>A8ZSP9</accession>